<proteinExistence type="inferred from homology"/>
<keyword id="KW-0963">Cytoplasm</keyword>
<keyword id="KW-0255">Endonuclease</keyword>
<keyword id="KW-0378">Hydrolase</keyword>
<keyword id="KW-0464">Manganese</keyword>
<keyword id="KW-0479">Metal-binding</keyword>
<keyword id="KW-0540">Nuclease</keyword>
<keyword id="KW-1185">Reference proteome</keyword>
<protein>
    <recommendedName>
        <fullName evidence="1">Ribonuclease HII</fullName>
        <shortName evidence="1">RNase HII</shortName>
        <ecNumber evidence="1">3.1.26.4</ecNumber>
    </recommendedName>
</protein>
<organism>
    <name type="scientific">Pseudomonas putida (strain ATCC 47054 / DSM 6125 / CFBP 8728 / NCIMB 11950 / KT2440)</name>
    <dbReference type="NCBI Taxonomy" id="160488"/>
    <lineage>
        <taxon>Bacteria</taxon>
        <taxon>Pseudomonadati</taxon>
        <taxon>Pseudomonadota</taxon>
        <taxon>Gammaproteobacteria</taxon>
        <taxon>Pseudomonadales</taxon>
        <taxon>Pseudomonadaceae</taxon>
        <taxon>Pseudomonas</taxon>
    </lineage>
</organism>
<name>RNH2_PSEPK</name>
<sequence>MQIGLDFNLVEDLVAGVDEVGRGPLCGAVVTAAVILDPARPILGLNDSKKLTEARREALFDEICEKALSFCIARAEVEEIDSLNILQATMLAMQRAVEGLHITPKLALIDGNRCPKLAVPAAPVVKGDSQVPAIAAASILAKVTRDREMSAFELIYPGYGIGGHKGYPTPVHLEALARLGPTPIHRRSFAPVRAAWEAREGVTDSLI</sequence>
<reference key="1">
    <citation type="journal article" date="2002" name="Environ. Microbiol.">
        <title>Complete genome sequence and comparative analysis of the metabolically versatile Pseudomonas putida KT2440.</title>
        <authorList>
            <person name="Nelson K.E."/>
            <person name="Weinel C."/>
            <person name="Paulsen I.T."/>
            <person name="Dodson R.J."/>
            <person name="Hilbert H."/>
            <person name="Martins dos Santos V.A.P."/>
            <person name="Fouts D.E."/>
            <person name="Gill S.R."/>
            <person name="Pop M."/>
            <person name="Holmes M."/>
            <person name="Brinkac L.M."/>
            <person name="Beanan M.J."/>
            <person name="DeBoy R.T."/>
            <person name="Daugherty S.C."/>
            <person name="Kolonay J.F."/>
            <person name="Madupu R."/>
            <person name="Nelson W.C."/>
            <person name="White O."/>
            <person name="Peterson J.D."/>
            <person name="Khouri H.M."/>
            <person name="Hance I."/>
            <person name="Chris Lee P."/>
            <person name="Holtzapple E.K."/>
            <person name="Scanlan D."/>
            <person name="Tran K."/>
            <person name="Moazzez A."/>
            <person name="Utterback T.R."/>
            <person name="Rizzo M."/>
            <person name="Lee K."/>
            <person name="Kosack D."/>
            <person name="Moestl D."/>
            <person name="Wedler H."/>
            <person name="Lauber J."/>
            <person name="Stjepandic D."/>
            <person name="Hoheisel J."/>
            <person name="Straetz M."/>
            <person name="Heim S."/>
            <person name="Kiewitz C."/>
            <person name="Eisen J.A."/>
            <person name="Timmis K.N."/>
            <person name="Duesterhoeft A."/>
            <person name="Tuemmler B."/>
            <person name="Fraser C.M."/>
        </authorList>
    </citation>
    <scope>NUCLEOTIDE SEQUENCE [LARGE SCALE GENOMIC DNA]</scope>
    <source>
        <strain>ATCC 47054 / DSM 6125 / CFBP 8728 / NCIMB 11950 / KT2440</strain>
    </source>
</reference>
<comment type="function">
    <text evidence="1">Endonuclease that specifically degrades the RNA of RNA-DNA hybrids.</text>
</comment>
<comment type="catalytic activity">
    <reaction evidence="1">
        <text>Endonucleolytic cleavage to 5'-phosphomonoester.</text>
        <dbReference type="EC" id="3.1.26.4"/>
    </reaction>
</comment>
<comment type="cofactor">
    <cofactor evidence="1">
        <name>Mn(2+)</name>
        <dbReference type="ChEBI" id="CHEBI:29035"/>
    </cofactor>
    <cofactor evidence="1">
        <name>Mg(2+)</name>
        <dbReference type="ChEBI" id="CHEBI:18420"/>
    </cofactor>
    <text evidence="1">Manganese or magnesium. Binds 1 divalent metal ion per monomer in the absence of substrate. May bind a second metal ion after substrate binding.</text>
</comment>
<comment type="subcellular location">
    <subcellularLocation>
        <location evidence="1">Cytoplasm</location>
    </subcellularLocation>
</comment>
<comment type="similarity">
    <text evidence="1">Belongs to the RNase HII family.</text>
</comment>
<accession>Q88MG6</accession>
<evidence type="ECO:0000255" key="1">
    <source>
        <dbReference type="HAMAP-Rule" id="MF_00052"/>
    </source>
</evidence>
<evidence type="ECO:0000255" key="2">
    <source>
        <dbReference type="PROSITE-ProRule" id="PRU01319"/>
    </source>
</evidence>
<gene>
    <name evidence="1" type="primary">rnhB</name>
    <name type="ordered locus">PP_1605</name>
</gene>
<dbReference type="EC" id="3.1.26.4" evidence="1"/>
<dbReference type="EMBL" id="AE015451">
    <property type="protein sequence ID" value="AAN67226.1"/>
    <property type="molecule type" value="Genomic_DNA"/>
</dbReference>
<dbReference type="RefSeq" id="NP_743762.1">
    <property type="nucleotide sequence ID" value="NC_002947.4"/>
</dbReference>
<dbReference type="RefSeq" id="WP_003252319.1">
    <property type="nucleotide sequence ID" value="NZ_CP169744.1"/>
</dbReference>
<dbReference type="SMR" id="Q88MG6"/>
<dbReference type="STRING" id="160488.PP_1605"/>
<dbReference type="PaxDb" id="160488-PP_1605"/>
<dbReference type="GeneID" id="83681915"/>
<dbReference type="KEGG" id="ppu:PP_1605"/>
<dbReference type="PATRIC" id="fig|160488.4.peg.1696"/>
<dbReference type="eggNOG" id="COG0164">
    <property type="taxonomic scope" value="Bacteria"/>
</dbReference>
<dbReference type="HOGENOM" id="CLU_036532_3_2_6"/>
<dbReference type="OrthoDB" id="9803420at2"/>
<dbReference type="PhylomeDB" id="Q88MG6"/>
<dbReference type="BioCyc" id="PPUT160488:G1G01-1702-MONOMER"/>
<dbReference type="Proteomes" id="UP000000556">
    <property type="component" value="Chromosome"/>
</dbReference>
<dbReference type="GO" id="GO:0005737">
    <property type="term" value="C:cytoplasm"/>
    <property type="evidence" value="ECO:0007669"/>
    <property type="project" value="UniProtKB-SubCell"/>
</dbReference>
<dbReference type="GO" id="GO:0032299">
    <property type="term" value="C:ribonuclease H2 complex"/>
    <property type="evidence" value="ECO:0007669"/>
    <property type="project" value="TreeGrafter"/>
</dbReference>
<dbReference type="GO" id="GO:0030145">
    <property type="term" value="F:manganese ion binding"/>
    <property type="evidence" value="ECO:0007669"/>
    <property type="project" value="UniProtKB-UniRule"/>
</dbReference>
<dbReference type="GO" id="GO:0003723">
    <property type="term" value="F:RNA binding"/>
    <property type="evidence" value="ECO:0007669"/>
    <property type="project" value="InterPro"/>
</dbReference>
<dbReference type="GO" id="GO:0004523">
    <property type="term" value="F:RNA-DNA hybrid ribonuclease activity"/>
    <property type="evidence" value="ECO:0007669"/>
    <property type="project" value="UniProtKB-UniRule"/>
</dbReference>
<dbReference type="GO" id="GO:0043137">
    <property type="term" value="P:DNA replication, removal of RNA primer"/>
    <property type="evidence" value="ECO:0007669"/>
    <property type="project" value="TreeGrafter"/>
</dbReference>
<dbReference type="GO" id="GO:0006298">
    <property type="term" value="P:mismatch repair"/>
    <property type="evidence" value="ECO:0007669"/>
    <property type="project" value="TreeGrafter"/>
</dbReference>
<dbReference type="CDD" id="cd07182">
    <property type="entry name" value="RNase_HII_bacteria_HII_like"/>
    <property type="match status" value="1"/>
</dbReference>
<dbReference type="FunFam" id="3.30.420.10:FF:000006">
    <property type="entry name" value="Ribonuclease HII"/>
    <property type="match status" value="1"/>
</dbReference>
<dbReference type="Gene3D" id="3.30.420.10">
    <property type="entry name" value="Ribonuclease H-like superfamily/Ribonuclease H"/>
    <property type="match status" value="1"/>
</dbReference>
<dbReference type="HAMAP" id="MF_00052_B">
    <property type="entry name" value="RNase_HII_B"/>
    <property type="match status" value="1"/>
</dbReference>
<dbReference type="InterPro" id="IPR022898">
    <property type="entry name" value="RNase_HII"/>
</dbReference>
<dbReference type="InterPro" id="IPR001352">
    <property type="entry name" value="RNase_HII/HIII"/>
</dbReference>
<dbReference type="InterPro" id="IPR024567">
    <property type="entry name" value="RNase_HII/HIII_dom"/>
</dbReference>
<dbReference type="InterPro" id="IPR012337">
    <property type="entry name" value="RNaseH-like_sf"/>
</dbReference>
<dbReference type="InterPro" id="IPR036397">
    <property type="entry name" value="RNaseH_sf"/>
</dbReference>
<dbReference type="NCBIfam" id="NF000595">
    <property type="entry name" value="PRK00015.1-3"/>
    <property type="match status" value="1"/>
</dbReference>
<dbReference type="NCBIfam" id="NF000596">
    <property type="entry name" value="PRK00015.1-4"/>
    <property type="match status" value="1"/>
</dbReference>
<dbReference type="PANTHER" id="PTHR10954">
    <property type="entry name" value="RIBONUCLEASE H2 SUBUNIT A"/>
    <property type="match status" value="1"/>
</dbReference>
<dbReference type="PANTHER" id="PTHR10954:SF18">
    <property type="entry name" value="RIBONUCLEASE HII"/>
    <property type="match status" value="1"/>
</dbReference>
<dbReference type="Pfam" id="PF01351">
    <property type="entry name" value="RNase_HII"/>
    <property type="match status" value="1"/>
</dbReference>
<dbReference type="SUPFAM" id="SSF53098">
    <property type="entry name" value="Ribonuclease H-like"/>
    <property type="match status" value="1"/>
</dbReference>
<dbReference type="PROSITE" id="PS51975">
    <property type="entry name" value="RNASE_H_2"/>
    <property type="match status" value="1"/>
</dbReference>
<feature type="chain" id="PRO_0000111606" description="Ribonuclease HII">
    <location>
        <begin position="1"/>
        <end position="207"/>
    </location>
</feature>
<feature type="domain" description="RNase H type-2" evidence="2">
    <location>
        <begin position="12"/>
        <end position="201"/>
    </location>
</feature>
<feature type="binding site" evidence="1">
    <location>
        <position position="18"/>
    </location>
    <ligand>
        <name>a divalent metal cation</name>
        <dbReference type="ChEBI" id="CHEBI:60240"/>
    </ligand>
</feature>
<feature type="binding site" evidence="1">
    <location>
        <position position="19"/>
    </location>
    <ligand>
        <name>a divalent metal cation</name>
        <dbReference type="ChEBI" id="CHEBI:60240"/>
    </ligand>
</feature>
<feature type="binding site" evidence="1">
    <location>
        <position position="110"/>
    </location>
    <ligand>
        <name>a divalent metal cation</name>
        <dbReference type="ChEBI" id="CHEBI:60240"/>
    </ligand>
</feature>